<name>HUTH_PARPJ</name>
<sequence>MMTLKPGYLTLPQLRQIAREHVALQLDPASHAAIDACAQAVADIAAKGEPAYGINTGFGRLASTHIPHDQLELLQRNLVLSHAVGVGEPMSRPVVRLLIALKLSSLGRGHSGIRREVMEALITLYNADVLPVIPVKGSVGASGDLAPLAHMSATLLGVGEVFAKGERMPATEGLALVGLKPLTLQAKEGLALLNGTQASTALALYNMFAIEDLYRTALVSGALSVDAAMGSVKPFDARIHELRGHQGQIDAAGAYRSLLQGSGINVSHADCDKVQDPYSLRCQPQVMGACLDQMRHAANVLLLEANAVSDNPLIFPDTGEVLSGGNFHAEPVAFAADNLALAAAEIGALAERRIALLIDATLSGLPPFLVRDGGVNSGFMIAHVTAAALASENKTLAHPASVDSLPTSANQEDHVSMATFAARKLGDIAENTANILSIELLAAAQGVDLRAPHKTSPSLQKVMDAVRKDVAHYELDHYFAPDIAAVTRLVQDGTIAKLSPLSFASEQ</sequence>
<dbReference type="EC" id="4.3.1.3" evidence="1"/>
<dbReference type="EMBL" id="CP001052">
    <property type="protein sequence ID" value="ACD15943.1"/>
    <property type="molecule type" value="Genomic_DNA"/>
</dbReference>
<dbReference type="RefSeq" id="WP_012432557.1">
    <property type="nucleotide sequence ID" value="NC_010681.1"/>
</dbReference>
<dbReference type="SMR" id="B2T2Y2"/>
<dbReference type="STRING" id="398527.Bphyt_1530"/>
<dbReference type="KEGG" id="bpy:Bphyt_1530"/>
<dbReference type="eggNOG" id="COG2986">
    <property type="taxonomic scope" value="Bacteria"/>
</dbReference>
<dbReference type="HOGENOM" id="CLU_014801_4_0_4"/>
<dbReference type="OrthoDB" id="9806955at2"/>
<dbReference type="UniPathway" id="UPA00379">
    <property type="reaction ID" value="UER00549"/>
</dbReference>
<dbReference type="Proteomes" id="UP000001739">
    <property type="component" value="Chromosome 1"/>
</dbReference>
<dbReference type="GO" id="GO:0005737">
    <property type="term" value="C:cytoplasm"/>
    <property type="evidence" value="ECO:0007669"/>
    <property type="project" value="UniProtKB-SubCell"/>
</dbReference>
<dbReference type="GO" id="GO:0004397">
    <property type="term" value="F:histidine ammonia-lyase activity"/>
    <property type="evidence" value="ECO:0007669"/>
    <property type="project" value="UniProtKB-UniRule"/>
</dbReference>
<dbReference type="GO" id="GO:0019556">
    <property type="term" value="P:L-histidine catabolic process to glutamate and formamide"/>
    <property type="evidence" value="ECO:0007669"/>
    <property type="project" value="UniProtKB-UniPathway"/>
</dbReference>
<dbReference type="GO" id="GO:0019557">
    <property type="term" value="P:L-histidine catabolic process to glutamate and formate"/>
    <property type="evidence" value="ECO:0007669"/>
    <property type="project" value="UniProtKB-UniPathway"/>
</dbReference>
<dbReference type="CDD" id="cd00332">
    <property type="entry name" value="PAL-HAL"/>
    <property type="match status" value="1"/>
</dbReference>
<dbReference type="FunFam" id="1.10.275.10:FF:000005">
    <property type="entry name" value="Histidine ammonia-lyase"/>
    <property type="match status" value="1"/>
</dbReference>
<dbReference type="FunFam" id="1.20.200.10:FF:000003">
    <property type="entry name" value="Histidine ammonia-lyase"/>
    <property type="match status" value="1"/>
</dbReference>
<dbReference type="Gene3D" id="1.20.200.10">
    <property type="entry name" value="Fumarase/aspartase (Central domain)"/>
    <property type="match status" value="1"/>
</dbReference>
<dbReference type="Gene3D" id="1.10.275.10">
    <property type="entry name" value="Fumarase/aspartase (N-terminal domain)"/>
    <property type="match status" value="1"/>
</dbReference>
<dbReference type="HAMAP" id="MF_00229">
    <property type="entry name" value="His_ammonia_lyase"/>
    <property type="match status" value="1"/>
</dbReference>
<dbReference type="InterPro" id="IPR001106">
    <property type="entry name" value="Aromatic_Lyase"/>
</dbReference>
<dbReference type="InterPro" id="IPR024083">
    <property type="entry name" value="Fumarase/histidase_N"/>
</dbReference>
<dbReference type="InterPro" id="IPR005921">
    <property type="entry name" value="HutH"/>
</dbReference>
<dbReference type="InterPro" id="IPR008948">
    <property type="entry name" value="L-Aspartase-like"/>
</dbReference>
<dbReference type="InterPro" id="IPR022313">
    <property type="entry name" value="Phe/His_NH3-lyase_AS"/>
</dbReference>
<dbReference type="NCBIfam" id="TIGR01225">
    <property type="entry name" value="hutH"/>
    <property type="match status" value="1"/>
</dbReference>
<dbReference type="NCBIfam" id="NF006871">
    <property type="entry name" value="PRK09367.1"/>
    <property type="match status" value="1"/>
</dbReference>
<dbReference type="PANTHER" id="PTHR10362">
    <property type="entry name" value="HISTIDINE AMMONIA-LYASE"/>
    <property type="match status" value="1"/>
</dbReference>
<dbReference type="Pfam" id="PF00221">
    <property type="entry name" value="Lyase_aromatic"/>
    <property type="match status" value="1"/>
</dbReference>
<dbReference type="SUPFAM" id="SSF48557">
    <property type="entry name" value="L-aspartase-like"/>
    <property type="match status" value="1"/>
</dbReference>
<dbReference type="PROSITE" id="PS00488">
    <property type="entry name" value="PAL_HISTIDASE"/>
    <property type="match status" value="1"/>
</dbReference>
<feature type="chain" id="PRO_1000100439" description="Histidine ammonia-lyase">
    <location>
        <begin position="1"/>
        <end position="507"/>
    </location>
</feature>
<feature type="modified residue" description="2,3-didehydroalanine (Ser)" evidence="1">
    <location>
        <position position="142"/>
    </location>
</feature>
<feature type="cross-link" description="5-imidazolinone (Ala-Gly)" evidence="1">
    <location>
        <begin position="141"/>
        <end position="143"/>
    </location>
</feature>
<keyword id="KW-0963">Cytoplasm</keyword>
<keyword id="KW-0369">Histidine metabolism</keyword>
<keyword id="KW-0456">Lyase</keyword>
<protein>
    <recommendedName>
        <fullName evidence="1">Histidine ammonia-lyase</fullName>
        <shortName evidence="1">Histidase</shortName>
        <ecNumber evidence="1">4.3.1.3</ecNumber>
    </recommendedName>
</protein>
<reference key="1">
    <citation type="journal article" date="2011" name="J. Bacteriol.">
        <title>Complete genome sequence of the plant growth-promoting endophyte Burkholderia phytofirmans strain PsJN.</title>
        <authorList>
            <person name="Weilharter A."/>
            <person name="Mitter B."/>
            <person name="Shin M.V."/>
            <person name="Chain P.S."/>
            <person name="Nowak J."/>
            <person name="Sessitsch A."/>
        </authorList>
    </citation>
    <scope>NUCLEOTIDE SEQUENCE [LARGE SCALE GENOMIC DNA]</scope>
    <source>
        <strain>DSM 17436 / LMG 22146 / PsJN</strain>
    </source>
</reference>
<comment type="catalytic activity">
    <reaction evidence="1">
        <text>L-histidine = trans-urocanate + NH4(+)</text>
        <dbReference type="Rhea" id="RHEA:21232"/>
        <dbReference type="ChEBI" id="CHEBI:17771"/>
        <dbReference type="ChEBI" id="CHEBI:28938"/>
        <dbReference type="ChEBI" id="CHEBI:57595"/>
        <dbReference type="EC" id="4.3.1.3"/>
    </reaction>
</comment>
<comment type="pathway">
    <text evidence="1">Amino-acid degradation; L-histidine degradation into L-glutamate; N-formimidoyl-L-glutamate from L-histidine: step 1/3.</text>
</comment>
<comment type="subcellular location">
    <subcellularLocation>
        <location evidence="1">Cytoplasm</location>
    </subcellularLocation>
</comment>
<comment type="PTM">
    <text evidence="1">Contains an active site 4-methylidene-imidazol-5-one (MIO), which is formed autocatalytically by cyclization and dehydration of residues Ala-Ser-Gly.</text>
</comment>
<comment type="similarity">
    <text evidence="1">Belongs to the PAL/histidase family.</text>
</comment>
<accession>B2T2Y2</accession>
<proteinExistence type="inferred from homology"/>
<evidence type="ECO:0000255" key="1">
    <source>
        <dbReference type="HAMAP-Rule" id="MF_00229"/>
    </source>
</evidence>
<organism>
    <name type="scientific">Paraburkholderia phytofirmans (strain DSM 17436 / LMG 22146 / PsJN)</name>
    <name type="common">Burkholderia phytofirmans</name>
    <dbReference type="NCBI Taxonomy" id="398527"/>
    <lineage>
        <taxon>Bacteria</taxon>
        <taxon>Pseudomonadati</taxon>
        <taxon>Pseudomonadota</taxon>
        <taxon>Betaproteobacteria</taxon>
        <taxon>Burkholderiales</taxon>
        <taxon>Burkholderiaceae</taxon>
        <taxon>Paraburkholderia</taxon>
    </lineage>
</organism>
<gene>
    <name evidence="1" type="primary">hutH</name>
    <name type="ordered locus">Bphyt_1530</name>
</gene>